<protein>
    <recommendedName>
        <fullName evidence="1">NAD(P)H-quinone oxidoreductase subunit 3</fullName>
        <ecNumber evidence="1">7.1.1.-</ecNumber>
    </recommendedName>
    <alternativeName>
        <fullName evidence="1">NAD(P)H dehydrogenase subunit 3</fullName>
    </alternativeName>
    <alternativeName>
        <fullName evidence="1">NADH-plastoquinone oxidoreductase subunit 3</fullName>
    </alternativeName>
    <alternativeName>
        <fullName evidence="1">NDH-1 subunit 3</fullName>
        <shortName evidence="1">NDH-C</shortName>
    </alternativeName>
</protein>
<accession>Q2JJB0</accession>
<organism>
    <name type="scientific">Synechococcus sp. (strain JA-2-3B'a(2-13))</name>
    <name type="common">Cyanobacteria bacterium Yellowstone B-Prime</name>
    <dbReference type="NCBI Taxonomy" id="321332"/>
    <lineage>
        <taxon>Bacteria</taxon>
        <taxon>Bacillati</taxon>
        <taxon>Cyanobacteriota</taxon>
        <taxon>Cyanophyceae</taxon>
        <taxon>Synechococcales</taxon>
        <taxon>Synechococcaceae</taxon>
        <taxon>Synechococcus</taxon>
    </lineage>
</organism>
<gene>
    <name evidence="1" type="primary">ndhC</name>
    <name type="ordered locus">CYB_2332</name>
</gene>
<name>NU3C_SYNJB</name>
<dbReference type="EC" id="7.1.1.-" evidence="1"/>
<dbReference type="EMBL" id="CP000240">
    <property type="protein sequence ID" value="ABD03271.1"/>
    <property type="molecule type" value="Genomic_DNA"/>
</dbReference>
<dbReference type="RefSeq" id="WP_011433900.1">
    <property type="nucleotide sequence ID" value="NC_007776.1"/>
</dbReference>
<dbReference type="SMR" id="Q2JJB0"/>
<dbReference type="STRING" id="321332.CYB_2332"/>
<dbReference type="KEGG" id="cyb:CYB_2332"/>
<dbReference type="eggNOG" id="COG0838">
    <property type="taxonomic scope" value="Bacteria"/>
</dbReference>
<dbReference type="HOGENOM" id="CLU_119549_1_1_3"/>
<dbReference type="OrthoDB" id="9791970at2"/>
<dbReference type="Proteomes" id="UP000001938">
    <property type="component" value="Chromosome"/>
</dbReference>
<dbReference type="GO" id="GO:0030964">
    <property type="term" value="C:NADH dehydrogenase complex"/>
    <property type="evidence" value="ECO:0007669"/>
    <property type="project" value="TreeGrafter"/>
</dbReference>
<dbReference type="GO" id="GO:0031676">
    <property type="term" value="C:plasma membrane-derived thylakoid membrane"/>
    <property type="evidence" value="ECO:0007669"/>
    <property type="project" value="UniProtKB-SubCell"/>
</dbReference>
<dbReference type="GO" id="GO:0008137">
    <property type="term" value="F:NADH dehydrogenase (ubiquinone) activity"/>
    <property type="evidence" value="ECO:0007669"/>
    <property type="project" value="InterPro"/>
</dbReference>
<dbReference type="GO" id="GO:0048038">
    <property type="term" value="F:quinone binding"/>
    <property type="evidence" value="ECO:0007669"/>
    <property type="project" value="UniProtKB-KW"/>
</dbReference>
<dbReference type="GO" id="GO:0019684">
    <property type="term" value="P:photosynthesis, light reaction"/>
    <property type="evidence" value="ECO:0007669"/>
    <property type="project" value="UniProtKB-UniRule"/>
</dbReference>
<dbReference type="FunFam" id="1.20.58.1610:FF:000001">
    <property type="entry name" value="NAD(P)H-quinone oxidoreductase subunit 3, chloroplastic"/>
    <property type="match status" value="1"/>
</dbReference>
<dbReference type="Gene3D" id="1.20.58.1610">
    <property type="entry name" value="NADH:ubiquinone/plastoquinone oxidoreductase, chain 3"/>
    <property type="match status" value="1"/>
</dbReference>
<dbReference type="HAMAP" id="MF_01394">
    <property type="entry name" value="NDH1_NuoA"/>
    <property type="match status" value="1"/>
</dbReference>
<dbReference type="InterPro" id="IPR023043">
    <property type="entry name" value="NAD(P)H_OxRDtase_bac/plastid"/>
</dbReference>
<dbReference type="InterPro" id="IPR000440">
    <property type="entry name" value="NADH_UbQ/plastoQ_OxRdtase_su3"/>
</dbReference>
<dbReference type="InterPro" id="IPR038430">
    <property type="entry name" value="NDAH_ubi_oxred_su3_sf"/>
</dbReference>
<dbReference type="PANTHER" id="PTHR11058">
    <property type="entry name" value="NADH-UBIQUINONE OXIDOREDUCTASE CHAIN 3"/>
    <property type="match status" value="1"/>
</dbReference>
<dbReference type="PANTHER" id="PTHR11058:SF9">
    <property type="entry name" value="NADH-UBIQUINONE OXIDOREDUCTASE CHAIN 3"/>
    <property type="match status" value="1"/>
</dbReference>
<dbReference type="Pfam" id="PF00507">
    <property type="entry name" value="Oxidored_q4"/>
    <property type="match status" value="1"/>
</dbReference>
<proteinExistence type="inferred from homology"/>
<evidence type="ECO:0000255" key="1">
    <source>
        <dbReference type="HAMAP-Rule" id="MF_01394"/>
    </source>
</evidence>
<keyword id="KW-0472">Membrane</keyword>
<keyword id="KW-0520">NAD</keyword>
<keyword id="KW-0521">NADP</keyword>
<keyword id="KW-0618">Plastoquinone</keyword>
<keyword id="KW-0874">Quinone</keyword>
<keyword id="KW-1185">Reference proteome</keyword>
<keyword id="KW-0793">Thylakoid</keyword>
<keyword id="KW-1278">Translocase</keyword>
<keyword id="KW-0812">Transmembrane</keyword>
<keyword id="KW-1133">Transmembrane helix</keyword>
<keyword id="KW-0813">Transport</keyword>
<comment type="function">
    <text evidence="1">NDH-1 shuttles electrons from an unknown electron donor, via FMN and iron-sulfur (Fe-S) centers, to quinones in the respiratory and/or the photosynthetic chain. The immediate electron acceptor for the enzyme in this species is believed to be plastoquinone. Couples the redox reaction to proton translocation, and thus conserves the redox energy in a proton gradient. Cyanobacterial NDH-1 also plays a role in inorganic carbon-concentration.</text>
</comment>
<comment type="catalytic activity">
    <reaction evidence="1">
        <text>a plastoquinone + NADH + (n+1) H(+)(in) = a plastoquinol + NAD(+) + n H(+)(out)</text>
        <dbReference type="Rhea" id="RHEA:42608"/>
        <dbReference type="Rhea" id="RHEA-COMP:9561"/>
        <dbReference type="Rhea" id="RHEA-COMP:9562"/>
        <dbReference type="ChEBI" id="CHEBI:15378"/>
        <dbReference type="ChEBI" id="CHEBI:17757"/>
        <dbReference type="ChEBI" id="CHEBI:57540"/>
        <dbReference type="ChEBI" id="CHEBI:57945"/>
        <dbReference type="ChEBI" id="CHEBI:62192"/>
    </reaction>
</comment>
<comment type="catalytic activity">
    <reaction evidence="1">
        <text>a plastoquinone + NADPH + (n+1) H(+)(in) = a plastoquinol + NADP(+) + n H(+)(out)</text>
        <dbReference type="Rhea" id="RHEA:42612"/>
        <dbReference type="Rhea" id="RHEA-COMP:9561"/>
        <dbReference type="Rhea" id="RHEA-COMP:9562"/>
        <dbReference type="ChEBI" id="CHEBI:15378"/>
        <dbReference type="ChEBI" id="CHEBI:17757"/>
        <dbReference type="ChEBI" id="CHEBI:57783"/>
        <dbReference type="ChEBI" id="CHEBI:58349"/>
        <dbReference type="ChEBI" id="CHEBI:62192"/>
    </reaction>
</comment>
<comment type="subunit">
    <text evidence="1">NDH-1 can be composed of about 15 different subunits; different subcomplexes with different compositions have been identified which probably have different functions.</text>
</comment>
<comment type="subcellular location">
    <subcellularLocation>
        <location evidence="1">Cellular thylakoid membrane</location>
        <topology evidence="1">Multi-pass membrane protein</topology>
    </subcellularLocation>
</comment>
<comment type="similarity">
    <text evidence="1">Belongs to the complex I subunit 3 family.</text>
</comment>
<feature type="chain" id="PRO_0000362791" description="NAD(P)H-quinone oxidoreductase subunit 3">
    <location>
        <begin position="1"/>
        <end position="120"/>
    </location>
</feature>
<feature type="transmembrane region" description="Helical" evidence="1">
    <location>
        <begin position="10"/>
        <end position="30"/>
    </location>
</feature>
<feature type="transmembrane region" description="Helical" evidence="1">
    <location>
        <begin position="64"/>
        <end position="84"/>
    </location>
</feature>
<feature type="transmembrane region" description="Helical" evidence="1">
    <location>
        <begin position="89"/>
        <end position="109"/>
    </location>
</feature>
<sequence>MFVLSGYEYLLVFLIVCSLLPILALGASALLAPKRRGSLRRSTYESGMEPFGQAWIQFNIRYYMFALVFVIFDVETVFLYPWAVAFHRLGLLAFVEALIFIAILVVGLVYAWRKGALEWS</sequence>
<reference key="1">
    <citation type="journal article" date="2007" name="ISME J.">
        <title>Population level functional diversity in a microbial community revealed by comparative genomic and metagenomic analyses.</title>
        <authorList>
            <person name="Bhaya D."/>
            <person name="Grossman A.R."/>
            <person name="Steunou A.-S."/>
            <person name="Khuri N."/>
            <person name="Cohan F.M."/>
            <person name="Hamamura N."/>
            <person name="Melendrez M.C."/>
            <person name="Bateson M.M."/>
            <person name="Ward D.M."/>
            <person name="Heidelberg J.F."/>
        </authorList>
    </citation>
    <scope>NUCLEOTIDE SEQUENCE [LARGE SCALE GENOMIC DNA]</scope>
    <source>
        <strain>JA-2-3B'a(2-13)</strain>
    </source>
</reference>